<feature type="chain" id="PRO_0000376354" description="NADH-quinone oxidoreductase subunit B">
    <location>
        <begin position="1"/>
        <end position="213"/>
    </location>
</feature>
<feature type="region of interest" description="Disordered" evidence="2">
    <location>
        <begin position="172"/>
        <end position="213"/>
    </location>
</feature>
<feature type="compositionally biased region" description="Acidic residues" evidence="2">
    <location>
        <begin position="197"/>
        <end position="206"/>
    </location>
</feature>
<feature type="binding site" evidence="1">
    <location>
        <position position="38"/>
    </location>
    <ligand>
        <name>[4Fe-4S] cluster</name>
        <dbReference type="ChEBI" id="CHEBI:49883"/>
    </ligand>
</feature>
<feature type="binding site" evidence="1">
    <location>
        <position position="39"/>
    </location>
    <ligand>
        <name>[4Fe-4S] cluster</name>
        <dbReference type="ChEBI" id="CHEBI:49883"/>
    </ligand>
</feature>
<feature type="binding site" evidence="1">
    <location>
        <position position="104"/>
    </location>
    <ligand>
        <name>[4Fe-4S] cluster</name>
        <dbReference type="ChEBI" id="CHEBI:49883"/>
    </ligand>
</feature>
<feature type="binding site" evidence="1">
    <location>
        <position position="133"/>
    </location>
    <ligand>
        <name>[4Fe-4S] cluster</name>
        <dbReference type="ChEBI" id="CHEBI:49883"/>
    </ligand>
</feature>
<evidence type="ECO:0000250" key="1"/>
<evidence type="ECO:0000256" key="2">
    <source>
        <dbReference type="SAM" id="MobiDB-lite"/>
    </source>
</evidence>
<evidence type="ECO:0000305" key="3"/>
<reference key="1">
    <citation type="journal article" date="2005" name="Proc. Natl. Acad. Sci. U.S.A.">
        <title>The genome of Salinibacter ruber: convergence and gene exchange among hyperhalophilic bacteria and archaea.</title>
        <authorList>
            <person name="Mongodin E.F."/>
            <person name="Nelson K.E."/>
            <person name="Daugherty S."/>
            <person name="DeBoy R.T."/>
            <person name="Wister J."/>
            <person name="Khouri H."/>
            <person name="Weidman J."/>
            <person name="Walsh D.A."/>
            <person name="Papke R.T."/>
            <person name="Sanchez Perez G."/>
            <person name="Sharma A.K."/>
            <person name="Nesbo C.L."/>
            <person name="MacLeod D."/>
            <person name="Bapteste E."/>
            <person name="Doolittle W.F."/>
            <person name="Charlebois R.L."/>
            <person name="Legault B."/>
            <person name="Rodriguez-Valera F."/>
        </authorList>
    </citation>
    <scope>NUCLEOTIDE SEQUENCE [LARGE SCALE GENOMIC DNA]</scope>
    <source>
        <strain>DSM 13855 / CECT 5946 / M31</strain>
    </source>
</reference>
<gene>
    <name type="primary">nuoB</name>
    <name type="ordered locus">SRU_0394</name>
</gene>
<dbReference type="EC" id="7.1.1.-"/>
<dbReference type="EMBL" id="CP000159">
    <property type="protein sequence ID" value="ABC43634.1"/>
    <property type="molecule type" value="Genomic_DNA"/>
</dbReference>
<dbReference type="RefSeq" id="WP_011403172.1">
    <property type="nucleotide sequence ID" value="NC_007677.1"/>
</dbReference>
<dbReference type="RefSeq" id="YP_444539.1">
    <property type="nucleotide sequence ID" value="NC_007677.1"/>
</dbReference>
<dbReference type="SMR" id="Q2S5J2"/>
<dbReference type="STRING" id="309807.SRU_0394"/>
<dbReference type="EnsemblBacteria" id="ABC43634">
    <property type="protein sequence ID" value="ABC43634"/>
    <property type="gene ID" value="SRU_0394"/>
</dbReference>
<dbReference type="GeneID" id="83727316"/>
<dbReference type="KEGG" id="sru:SRU_0394"/>
<dbReference type="PATRIC" id="fig|309807.25.peg.413"/>
<dbReference type="eggNOG" id="COG0377">
    <property type="taxonomic scope" value="Bacteria"/>
</dbReference>
<dbReference type="HOGENOM" id="CLU_055737_7_3_10"/>
<dbReference type="OrthoDB" id="9786737at2"/>
<dbReference type="Proteomes" id="UP000008674">
    <property type="component" value="Chromosome"/>
</dbReference>
<dbReference type="GO" id="GO:0005886">
    <property type="term" value="C:plasma membrane"/>
    <property type="evidence" value="ECO:0007669"/>
    <property type="project" value="UniProtKB-SubCell"/>
</dbReference>
<dbReference type="GO" id="GO:0045271">
    <property type="term" value="C:respiratory chain complex I"/>
    <property type="evidence" value="ECO:0007669"/>
    <property type="project" value="TreeGrafter"/>
</dbReference>
<dbReference type="GO" id="GO:0051539">
    <property type="term" value="F:4 iron, 4 sulfur cluster binding"/>
    <property type="evidence" value="ECO:0007669"/>
    <property type="project" value="UniProtKB-KW"/>
</dbReference>
<dbReference type="GO" id="GO:0005506">
    <property type="term" value="F:iron ion binding"/>
    <property type="evidence" value="ECO:0007669"/>
    <property type="project" value="UniProtKB-UniRule"/>
</dbReference>
<dbReference type="GO" id="GO:0008137">
    <property type="term" value="F:NADH dehydrogenase (ubiquinone) activity"/>
    <property type="evidence" value="ECO:0007669"/>
    <property type="project" value="InterPro"/>
</dbReference>
<dbReference type="GO" id="GO:0050136">
    <property type="term" value="F:NADH:ubiquinone reductase (non-electrogenic) activity"/>
    <property type="evidence" value="ECO:0007669"/>
    <property type="project" value="UniProtKB-UniRule"/>
</dbReference>
<dbReference type="GO" id="GO:0048038">
    <property type="term" value="F:quinone binding"/>
    <property type="evidence" value="ECO:0007669"/>
    <property type="project" value="UniProtKB-KW"/>
</dbReference>
<dbReference type="GO" id="GO:0009060">
    <property type="term" value="P:aerobic respiration"/>
    <property type="evidence" value="ECO:0007669"/>
    <property type="project" value="TreeGrafter"/>
</dbReference>
<dbReference type="GO" id="GO:0015990">
    <property type="term" value="P:electron transport coupled proton transport"/>
    <property type="evidence" value="ECO:0007669"/>
    <property type="project" value="TreeGrafter"/>
</dbReference>
<dbReference type="FunFam" id="3.40.50.12280:FF:000002">
    <property type="entry name" value="NADH-quinone oxidoreductase subunit B"/>
    <property type="match status" value="1"/>
</dbReference>
<dbReference type="Gene3D" id="3.40.50.12280">
    <property type="match status" value="1"/>
</dbReference>
<dbReference type="HAMAP" id="MF_01356">
    <property type="entry name" value="NDH1_NuoB"/>
    <property type="match status" value="1"/>
</dbReference>
<dbReference type="InterPro" id="IPR006137">
    <property type="entry name" value="NADH_UbQ_OxRdtase-like_20kDa"/>
</dbReference>
<dbReference type="InterPro" id="IPR006138">
    <property type="entry name" value="NADH_UQ_OxRdtase_20Kd_su"/>
</dbReference>
<dbReference type="NCBIfam" id="TIGR01957">
    <property type="entry name" value="nuoB_fam"/>
    <property type="match status" value="1"/>
</dbReference>
<dbReference type="NCBIfam" id="NF005012">
    <property type="entry name" value="PRK06411.1"/>
    <property type="match status" value="1"/>
</dbReference>
<dbReference type="PANTHER" id="PTHR11995">
    <property type="entry name" value="NADH DEHYDROGENASE"/>
    <property type="match status" value="1"/>
</dbReference>
<dbReference type="PANTHER" id="PTHR11995:SF14">
    <property type="entry name" value="NADH DEHYDROGENASE [UBIQUINONE] IRON-SULFUR PROTEIN 7, MITOCHONDRIAL"/>
    <property type="match status" value="1"/>
</dbReference>
<dbReference type="Pfam" id="PF01058">
    <property type="entry name" value="Oxidored_q6"/>
    <property type="match status" value="1"/>
</dbReference>
<dbReference type="SUPFAM" id="SSF56770">
    <property type="entry name" value="HydA/Nqo6-like"/>
    <property type="match status" value="1"/>
</dbReference>
<protein>
    <recommendedName>
        <fullName>NADH-quinone oxidoreductase subunit B</fullName>
        <ecNumber>7.1.1.-</ecNumber>
    </recommendedName>
    <alternativeName>
        <fullName>NADH dehydrogenase I subunit B</fullName>
    </alternativeName>
    <alternativeName>
        <fullName>NDH-1 subunit B</fullName>
    </alternativeName>
</protein>
<name>NUOB_SALRD</name>
<sequence length="213" mass="23408">MAGSSGTNGQGFFTTRVDTFLNWARSNSLMPMPMGLACCAIEMMGFAGPKYDSARFGSEAMRFSPRQADLMIVAGWCSYKMSHAIRRVWDQMGDPKWCIAMGACASTGGMHRCYGVVQGVDNFLPVDVYISGCPPRPESVLHALMDIQEKIRNEYSVVQDYEFGKARERAPIMPENTNRFPGQLEKPKTSTLTLEAPDADDAEEASTPEPVAA</sequence>
<keyword id="KW-0004">4Fe-4S</keyword>
<keyword id="KW-0997">Cell inner membrane</keyword>
<keyword id="KW-1003">Cell membrane</keyword>
<keyword id="KW-0408">Iron</keyword>
<keyword id="KW-0411">Iron-sulfur</keyword>
<keyword id="KW-0472">Membrane</keyword>
<keyword id="KW-0479">Metal-binding</keyword>
<keyword id="KW-0520">NAD</keyword>
<keyword id="KW-0874">Quinone</keyword>
<keyword id="KW-1185">Reference proteome</keyword>
<keyword id="KW-1278">Translocase</keyword>
<keyword id="KW-0813">Transport</keyword>
<comment type="function">
    <text evidence="1">NDH-1 shuttles electrons from NADH, via FMN and iron-sulfur (Fe-S) centers, to quinones in the respiratory chain. The immediate electron acceptor for the enzyme in this species is believed to be a menaquinone. Couples the redox reaction to proton translocation (for every two electrons transferred, four hydrogen ions are translocated across the cytoplasmic membrane), and thus conserves the redox energy in a proton gradient.</text>
</comment>
<comment type="catalytic activity">
    <reaction>
        <text>a quinone + NADH + 5 H(+)(in) = a quinol + NAD(+) + 4 H(+)(out)</text>
        <dbReference type="Rhea" id="RHEA:57888"/>
        <dbReference type="ChEBI" id="CHEBI:15378"/>
        <dbReference type="ChEBI" id="CHEBI:24646"/>
        <dbReference type="ChEBI" id="CHEBI:57540"/>
        <dbReference type="ChEBI" id="CHEBI:57945"/>
        <dbReference type="ChEBI" id="CHEBI:132124"/>
    </reaction>
</comment>
<comment type="cofactor">
    <cofactor evidence="1">
        <name>[4Fe-4S] cluster</name>
        <dbReference type="ChEBI" id="CHEBI:49883"/>
    </cofactor>
    <text evidence="1">Binds 1 [4Fe-4S] cluster.</text>
</comment>
<comment type="subunit">
    <text evidence="1">NDH-1 is composed of 14 different subunits. Subunits NuoB, C, D, E, F, and G constitute the peripheral sector of the complex (By similarity).</text>
</comment>
<comment type="subcellular location">
    <subcellularLocation>
        <location evidence="1">Cell inner membrane</location>
        <topology evidence="1">Peripheral membrane protein</topology>
        <orientation evidence="1">Cytoplasmic side</orientation>
    </subcellularLocation>
</comment>
<comment type="similarity">
    <text evidence="3">Belongs to the complex I 20 kDa subunit family.</text>
</comment>
<accession>Q2S5J2</accession>
<organism>
    <name type="scientific">Salinibacter ruber (strain DSM 13855 / M31)</name>
    <dbReference type="NCBI Taxonomy" id="309807"/>
    <lineage>
        <taxon>Bacteria</taxon>
        <taxon>Pseudomonadati</taxon>
        <taxon>Rhodothermota</taxon>
        <taxon>Rhodothermia</taxon>
        <taxon>Rhodothermales</taxon>
        <taxon>Salinibacteraceae</taxon>
        <taxon>Salinibacter</taxon>
    </lineage>
</organism>
<proteinExistence type="inferred from homology"/>